<proteinExistence type="predicted"/>
<organism>
    <name type="scientific">Rhizobium fredii</name>
    <name type="common">Sinorhizobium fredii</name>
    <dbReference type="NCBI Taxonomy" id="380"/>
    <lineage>
        <taxon>Bacteria</taxon>
        <taxon>Pseudomonadati</taxon>
        <taxon>Pseudomonadota</taxon>
        <taxon>Alphaproteobacteria</taxon>
        <taxon>Hyphomicrobiales</taxon>
        <taxon>Rhizobiaceae</taxon>
        <taxon>Sinorhizobium/Ensifer group</taxon>
        <taxon>Sinorhizobium</taxon>
    </lineage>
</organism>
<sequence>MDVAFDLVNYAYASRLRLLKEMRERDARRKLSKKEAQHHMAIVAAQNASRELEIAQQQRAGKEAQLYQELTSLNTLSSAALDHHHLHIERLAAEITIRGQVLDDARIAQEQAETAASEAKALLVKRSEARHKWQQIQDDLRRAVDILSEAAGEIEADDEILLRYGRGSLAQRSRNEFR</sequence>
<feature type="chain" id="PRO_0000200973" description="Uncharacterized protein ORF7">
    <location>
        <begin position="1"/>
        <end position="178"/>
    </location>
</feature>
<geneLocation type="plasmid">
    <name>sym</name>
</geneLocation>
<accession>P72273</accession>
<dbReference type="EMBL" id="L12251">
    <property type="protein sequence ID" value="AAB17682.1"/>
    <property type="molecule type" value="Genomic_DNA"/>
</dbReference>
<dbReference type="RefSeq" id="WP_014857562.1">
    <property type="nucleotide sequence ID" value="NZ_WITA01000257.1"/>
</dbReference>
<dbReference type="SMR" id="P72273"/>
<dbReference type="GeneID" id="48977733"/>
<dbReference type="Gene3D" id="1.10.287.1700">
    <property type="match status" value="1"/>
</dbReference>
<dbReference type="InterPro" id="IPR053716">
    <property type="entry name" value="Flag_assembly_chemotaxis_eff"/>
</dbReference>
<reference key="1">
    <citation type="submission" date="1996-10" db="EMBL/GenBank/DDBJ databases">
        <title>Genes controlling cultivar-specific nodulation of soybean by Rhizobium fredii are homologous genes encoding type III secretion systems in other bacteria.</title>
        <authorList>
            <person name="He X.T."/>
            <person name="Krishnan H.B."/>
            <person name="Pueppke S.G."/>
        </authorList>
    </citation>
    <scope>NUCLEOTIDE SEQUENCE [GENOMIC DNA]</scope>
    <source>
        <strain>USDA 257</strain>
    </source>
</reference>
<protein>
    <recommendedName>
        <fullName>Uncharacterized protein ORF7</fullName>
    </recommendedName>
    <alternativeName>
        <fullName>ORF7</fullName>
    </alternativeName>
</protein>
<keyword id="KW-0614">Plasmid</keyword>
<name>Y4YJ_RHIFR</name>